<reference key="1">
    <citation type="journal article" date="2004" name="Science">
        <title>Complete genome sequence of the apicomplexan, Cryptosporidium parvum.</title>
        <authorList>
            <person name="Abrahamsen M.S."/>
            <person name="Templeton T.J."/>
            <person name="Enomoto S."/>
            <person name="Abrahante J.E."/>
            <person name="Zhu G."/>
            <person name="Lancto C.A."/>
            <person name="Deng M."/>
            <person name="Liu C."/>
            <person name="Widmer G."/>
            <person name="Tzipori S."/>
            <person name="Buck G.A."/>
            <person name="Xu P."/>
            <person name="Bankier A.T."/>
            <person name="Dear P.H."/>
            <person name="Konfortov B.A."/>
            <person name="Spriggs H.F."/>
            <person name="Iyer L."/>
            <person name="Anantharaman V."/>
            <person name="Aravind L."/>
            <person name="Kapur V."/>
        </authorList>
    </citation>
    <scope>NUCLEOTIDE SEQUENCE [LARGE SCALE GENOMIC DNA]</scope>
    <source>
        <strain>Iowa II</strain>
    </source>
</reference>
<evidence type="ECO:0000255" key="1">
    <source>
        <dbReference type="HAMAP-Rule" id="MF_03111"/>
    </source>
</evidence>
<accession>Q5CT19</accession>
<protein>
    <recommendedName>
        <fullName evidence="1">Ubiquinone biosynthesis protein COQ4 homolog, mitochondrial</fullName>
    </recommendedName>
    <alternativeName>
        <fullName>4-hydroxy-3-methoxy-5-polyprenylbenzoate decarboxylase</fullName>
        <ecNumber evidence="1">4.1.1.130</ecNumber>
    </alternativeName>
    <alternativeName>
        <fullName evidence="1">Coenzyme Q biosynthesis protein 4 homolog</fullName>
    </alternativeName>
</protein>
<organism>
    <name type="scientific">Cryptosporidium parvum (strain Iowa II)</name>
    <dbReference type="NCBI Taxonomy" id="353152"/>
    <lineage>
        <taxon>Eukaryota</taxon>
        <taxon>Sar</taxon>
        <taxon>Alveolata</taxon>
        <taxon>Apicomplexa</taxon>
        <taxon>Conoidasida</taxon>
        <taxon>Coccidia</taxon>
        <taxon>Eucoccidiorida</taxon>
        <taxon>Eimeriorina</taxon>
        <taxon>Cryptosporidiidae</taxon>
        <taxon>Cryptosporidium</taxon>
    </lineage>
</organism>
<sequence length="305" mass="35648">MNKFTNLLIKRTASSLKGGDFRELFRKNYIPITQFEKVLLSVTSCVEGLKNPTDSNSVACITELTSNRALRRLQILMNSTPDGRRIIKNRPLIDSSKYSIKDLMAFPDDSLGRRYGEFLTTYNLEINRDPVRYVNSEDLAYVLTRFRQIHDILHTAFELNITVESEVTLKLFEFLHAGIPFGAIGAFMGLFITPILKVRPKEIFENHNKTHVYPSKPIQIHQDCDKYLNSLEITKKEILYPKRIVIKELIPWIYKAEKKMRHNIYTIMVEDWFPRPIADFQNYLNISPPPKQLQKYTRIKPMPFC</sequence>
<feature type="chain" id="PRO_0000388075" description="Ubiquinone biosynthesis protein COQ4 homolog, mitochondrial">
    <location>
        <begin position="1"/>
        <end position="305"/>
    </location>
</feature>
<feature type="binding site" evidence="1">
    <location>
        <position position="150"/>
    </location>
    <ligand>
        <name>Zn(2+)</name>
        <dbReference type="ChEBI" id="CHEBI:29105"/>
    </ligand>
</feature>
<feature type="binding site" evidence="1">
    <location>
        <position position="151"/>
    </location>
    <ligand>
        <name>Zn(2+)</name>
        <dbReference type="ChEBI" id="CHEBI:29105"/>
    </ligand>
</feature>
<feature type="binding site" evidence="1">
    <location>
        <position position="154"/>
    </location>
    <ligand>
        <name>Zn(2+)</name>
        <dbReference type="ChEBI" id="CHEBI:29105"/>
    </ligand>
</feature>
<feature type="binding site" evidence="1">
    <location>
        <position position="166"/>
    </location>
    <ligand>
        <name>Zn(2+)</name>
        <dbReference type="ChEBI" id="CHEBI:29105"/>
    </ligand>
</feature>
<keyword id="KW-0456">Lyase</keyword>
<keyword id="KW-0472">Membrane</keyword>
<keyword id="KW-0479">Metal-binding</keyword>
<keyword id="KW-0496">Mitochondrion</keyword>
<keyword id="KW-0999">Mitochondrion inner membrane</keyword>
<keyword id="KW-1185">Reference proteome</keyword>
<keyword id="KW-0831">Ubiquinone biosynthesis</keyword>
<keyword id="KW-0862">Zinc</keyword>
<proteinExistence type="inferred from homology"/>
<dbReference type="EC" id="4.1.1.130" evidence="1"/>
<dbReference type="EMBL" id="AAEE01000006">
    <property type="protein sequence ID" value="EAK88604.1"/>
    <property type="molecule type" value="Genomic_DNA"/>
</dbReference>
<dbReference type="RefSeq" id="XP_627898.1">
    <property type="nucleotide sequence ID" value="XM_627898.1"/>
</dbReference>
<dbReference type="SMR" id="Q5CT19"/>
<dbReference type="STRING" id="353152.Q5CT19"/>
<dbReference type="EnsemblProtists" id="EAK88604">
    <property type="protein sequence ID" value="EAK88604"/>
    <property type="gene ID" value="cgd1_380"/>
</dbReference>
<dbReference type="GeneID" id="3371528"/>
<dbReference type="KEGG" id="cpv:cgd1_380"/>
<dbReference type="VEuPathDB" id="CryptoDB:cgd1_380"/>
<dbReference type="InParanoid" id="Q5CT19"/>
<dbReference type="OMA" id="YYERHFH"/>
<dbReference type="OrthoDB" id="4249at2759"/>
<dbReference type="UniPathway" id="UPA00232"/>
<dbReference type="Proteomes" id="UP000006726">
    <property type="component" value="Chromosome 1"/>
</dbReference>
<dbReference type="GO" id="GO:0031314">
    <property type="term" value="C:extrinsic component of mitochondrial inner membrane"/>
    <property type="evidence" value="ECO:0007669"/>
    <property type="project" value="UniProtKB-UniRule"/>
</dbReference>
<dbReference type="GO" id="GO:0006744">
    <property type="term" value="P:ubiquinone biosynthetic process"/>
    <property type="evidence" value="ECO:0007669"/>
    <property type="project" value="UniProtKB-UniRule"/>
</dbReference>
<dbReference type="HAMAP" id="MF_03111">
    <property type="entry name" value="Coq4"/>
    <property type="match status" value="1"/>
</dbReference>
<dbReference type="InterPro" id="IPR007715">
    <property type="entry name" value="Coq4"/>
</dbReference>
<dbReference type="InterPro" id="IPR027540">
    <property type="entry name" value="Coq4_euk"/>
</dbReference>
<dbReference type="PANTHER" id="PTHR12922">
    <property type="entry name" value="UBIQUINONE BIOSYNTHESIS PROTEIN"/>
    <property type="match status" value="1"/>
</dbReference>
<dbReference type="PANTHER" id="PTHR12922:SF7">
    <property type="entry name" value="UBIQUINONE BIOSYNTHESIS PROTEIN COQ4 HOMOLOG, MITOCHONDRIAL"/>
    <property type="match status" value="1"/>
</dbReference>
<dbReference type="Pfam" id="PF05019">
    <property type="entry name" value="Coq4"/>
    <property type="match status" value="1"/>
</dbReference>
<name>COQ4_CRYPI</name>
<comment type="function">
    <text evidence="1">Lyase that catalyzes the C1-decarboxylation of 4-hydroxy-3-methoxy-5-(all-trans-polyprenyl)benzoic acid into 2-methoxy-6-(all-trans-polyprenyl)phenol during ubiquinone biosynthesis.</text>
</comment>
<comment type="catalytic activity">
    <reaction evidence="1">
        <text>a 4-hydroxy-3-methoxy-5-(all-trans-polyprenyl)benzoate + H(+) = a 2-methoxy-6-(all-trans-polyprenyl)phenol + CO2</text>
        <dbReference type="Rhea" id="RHEA:81179"/>
        <dbReference type="Rhea" id="RHEA-COMP:9551"/>
        <dbReference type="Rhea" id="RHEA-COMP:10931"/>
        <dbReference type="ChEBI" id="CHEBI:15378"/>
        <dbReference type="ChEBI" id="CHEBI:16526"/>
        <dbReference type="ChEBI" id="CHEBI:62731"/>
        <dbReference type="ChEBI" id="CHEBI:84443"/>
        <dbReference type="EC" id="4.1.1.130"/>
    </reaction>
</comment>
<comment type="cofactor">
    <cofactor evidence="1">
        <name>Zn(2+)</name>
        <dbReference type="ChEBI" id="CHEBI:29105"/>
    </cofactor>
</comment>
<comment type="pathway">
    <text evidence="1">Cofactor biosynthesis; ubiquinone biosynthesis.</text>
</comment>
<comment type="subunit">
    <text evidence="1">Component of a multi-subunit COQ enzyme complex.</text>
</comment>
<comment type="subcellular location">
    <subcellularLocation>
        <location evidence="1">Mitochondrion inner membrane</location>
        <topology evidence="1">Peripheral membrane protein</topology>
        <orientation evidence="1">Matrix side</orientation>
    </subcellularLocation>
</comment>
<comment type="miscellaneous">
    <text evidence="1">This protein may be expected to contain an N-terminal transit peptide but none has been predicted.</text>
</comment>
<comment type="similarity">
    <text evidence="1">Belongs to the COQ4 family.</text>
</comment>
<gene>
    <name type="ORF">cgd1_380</name>
</gene>